<evidence type="ECO:0000255" key="1">
    <source>
        <dbReference type="PROSITE-ProRule" id="PRU00434"/>
    </source>
</evidence>
<evidence type="ECO:0000269" key="2">
    <source>
    </source>
</evidence>
<evidence type="ECO:0000269" key="3">
    <source>
    </source>
</evidence>
<evidence type="ECO:0000303" key="4">
    <source>
    </source>
</evidence>
<evidence type="ECO:0000305" key="5"/>
<evidence type="ECO:0000305" key="6">
    <source>
    </source>
</evidence>
<evidence type="ECO:0000305" key="7">
    <source>
    </source>
</evidence>
<evidence type="ECO:0000312" key="8">
    <source>
        <dbReference type="EMBL" id="BAA18741.1"/>
    </source>
</evidence>
<proteinExistence type="evidence at protein level"/>
<dbReference type="EC" id="7.5.2.-" evidence="7"/>
<dbReference type="EMBL" id="U32936">
    <property type="protein sequence ID" value="AAB41280.1"/>
    <property type="molecule type" value="Genomic_DNA"/>
</dbReference>
<dbReference type="EMBL" id="BA000022">
    <property type="protein sequence ID" value="BAA18741.1"/>
    <property type="molecule type" value="Genomic_DNA"/>
</dbReference>
<dbReference type="PIR" id="S76829">
    <property type="entry name" value="S76829"/>
</dbReference>
<dbReference type="SMR" id="Q79EE4"/>
<dbReference type="FunCoup" id="Q79EE4">
    <property type="interactions" value="442"/>
</dbReference>
<dbReference type="IntAct" id="Q79EE4">
    <property type="interactions" value="2"/>
</dbReference>
<dbReference type="STRING" id="1148.gene:10500513"/>
<dbReference type="TCDB" id="3.A.1.1.32">
    <property type="family name" value="the atp-binding cassette (abc) superfamily"/>
</dbReference>
<dbReference type="PaxDb" id="1148-1653830"/>
<dbReference type="EnsemblBacteria" id="BAA18741">
    <property type="protein sequence ID" value="BAA18741"/>
    <property type="gene ID" value="BAA18741"/>
</dbReference>
<dbReference type="KEGG" id="syn:slr0747"/>
<dbReference type="PATRIC" id="fig|1148.106.peg.3381"/>
<dbReference type="eggNOG" id="COG3842">
    <property type="taxonomic scope" value="Bacteria"/>
</dbReference>
<dbReference type="InParanoid" id="Q79EE4"/>
<dbReference type="PhylomeDB" id="Q79EE4"/>
<dbReference type="Proteomes" id="UP000001425">
    <property type="component" value="Chromosome"/>
</dbReference>
<dbReference type="GO" id="GO:0055052">
    <property type="term" value="C:ATP-binding cassette (ABC) transporter complex, substrate-binding subunit-containing"/>
    <property type="evidence" value="ECO:0000318"/>
    <property type="project" value="GO_Central"/>
</dbReference>
<dbReference type="GO" id="GO:0140359">
    <property type="term" value="F:ABC-type transporter activity"/>
    <property type="evidence" value="ECO:0007669"/>
    <property type="project" value="InterPro"/>
</dbReference>
<dbReference type="GO" id="GO:0005524">
    <property type="term" value="F:ATP binding"/>
    <property type="evidence" value="ECO:0007669"/>
    <property type="project" value="UniProtKB-KW"/>
</dbReference>
<dbReference type="GO" id="GO:0016887">
    <property type="term" value="F:ATP hydrolysis activity"/>
    <property type="evidence" value="ECO:0007669"/>
    <property type="project" value="InterPro"/>
</dbReference>
<dbReference type="GO" id="GO:0008643">
    <property type="term" value="P:carbohydrate transport"/>
    <property type="evidence" value="ECO:0007669"/>
    <property type="project" value="InterPro"/>
</dbReference>
<dbReference type="CDD" id="cd03301">
    <property type="entry name" value="ABC_MalK_N"/>
    <property type="match status" value="1"/>
</dbReference>
<dbReference type="FunFam" id="3.40.50.300:FF:002210">
    <property type="entry name" value="Sugar ABC transporter ATP-binding protein"/>
    <property type="match status" value="1"/>
</dbReference>
<dbReference type="Gene3D" id="2.40.50.100">
    <property type="match status" value="1"/>
</dbReference>
<dbReference type="Gene3D" id="2.40.50.140">
    <property type="entry name" value="Nucleic acid-binding proteins"/>
    <property type="match status" value="1"/>
</dbReference>
<dbReference type="Gene3D" id="3.40.50.300">
    <property type="entry name" value="P-loop containing nucleotide triphosphate hydrolases"/>
    <property type="match status" value="1"/>
</dbReference>
<dbReference type="InterPro" id="IPR003593">
    <property type="entry name" value="AAA+_ATPase"/>
</dbReference>
<dbReference type="InterPro" id="IPR003439">
    <property type="entry name" value="ABC_transporter-like_ATP-bd"/>
</dbReference>
<dbReference type="InterPro" id="IPR017871">
    <property type="entry name" value="ABC_transporter-like_CS"/>
</dbReference>
<dbReference type="InterPro" id="IPR015855">
    <property type="entry name" value="ABC_transpr_MalK-like"/>
</dbReference>
<dbReference type="InterPro" id="IPR047641">
    <property type="entry name" value="ABC_transpr_MalK/UgpC-like"/>
</dbReference>
<dbReference type="InterPro" id="IPR008995">
    <property type="entry name" value="Mo/tungstate-bd_C_term_dom"/>
</dbReference>
<dbReference type="InterPro" id="IPR012340">
    <property type="entry name" value="NA-bd_OB-fold"/>
</dbReference>
<dbReference type="InterPro" id="IPR040582">
    <property type="entry name" value="OB_MalK-like"/>
</dbReference>
<dbReference type="InterPro" id="IPR027417">
    <property type="entry name" value="P-loop_NTPase"/>
</dbReference>
<dbReference type="NCBIfam" id="NF008653">
    <property type="entry name" value="PRK11650.1"/>
    <property type="match status" value="1"/>
</dbReference>
<dbReference type="PANTHER" id="PTHR43875">
    <property type="entry name" value="MALTODEXTRIN IMPORT ATP-BINDING PROTEIN MSMX"/>
    <property type="match status" value="1"/>
</dbReference>
<dbReference type="PANTHER" id="PTHR43875:SF1">
    <property type="entry name" value="OSMOPROTECTIVE COMPOUNDS UPTAKE ATP-BINDING PROTEIN GGTA"/>
    <property type="match status" value="1"/>
</dbReference>
<dbReference type="Pfam" id="PF00005">
    <property type="entry name" value="ABC_tran"/>
    <property type="match status" value="1"/>
</dbReference>
<dbReference type="Pfam" id="PF17912">
    <property type="entry name" value="OB_MalK"/>
    <property type="match status" value="1"/>
</dbReference>
<dbReference type="SMART" id="SM00382">
    <property type="entry name" value="AAA"/>
    <property type="match status" value="1"/>
</dbReference>
<dbReference type="SUPFAM" id="SSF50331">
    <property type="entry name" value="MOP-like"/>
    <property type="match status" value="1"/>
</dbReference>
<dbReference type="SUPFAM" id="SSF52540">
    <property type="entry name" value="P-loop containing nucleoside triphosphate hydrolases"/>
    <property type="match status" value="1"/>
</dbReference>
<dbReference type="PROSITE" id="PS00211">
    <property type="entry name" value="ABC_TRANSPORTER_1"/>
    <property type="match status" value="1"/>
</dbReference>
<dbReference type="PROSITE" id="PS50893">
    <property type="entry name" value="ABC_TRANSPORTER_2"/>
    <property type="match status" value="1"/>
</dbReference>
<organism>
    <name type="scientific">Synechocystis sp. (strain ATCC 27184 / PCC 6803 / Kazusa)</name>
    <dbReference type="NCBI Taxonomy" id="1111708"/>
    <lineage>
        <taxon>Bacteria</taxon>
        <taxon>Bacillati</taxon>
        <taxon>Cyanobacteriota</taxon>
        <taxon>Cyanophyceae</taxon>
        <taxon>Synechococcales</taxon>
        <taxon>Merismopediaceae</taxon>
        <taxon>Synechocystis</taxon>
    </lineage>
</organism>
<reference key="1">
    <citation type="journal article" date="1996" name="Arch. Microbiol.">
        <title>Characterization of a glucosylglycerol-phosphate-accumulating, salt-sensitive mutant of the cyanobacterium Synechocystis sp. strain PCC 6803.</title>
        <authorList>
            <person name="Hagemann M."/>
            <person name="Richter S."/>
            <person name="Zuther E."/>
            <person name="Schoor A."/>
        </authorList>
    </citation>
    <scope>NUCLEOTIDE SEQUENCE [GENOMIC DNA]</scope>
</reference>
<reference key="2">
    <citation type="journal article" date="1996" name="DNA Res.">
        <title>Sequence analysis of the genome of the unicellular cyanobacterium Synechocystis sp. strain PCC6803. II. Sequence determination of the entire genome and assignment of potential protein-coding regions.</title>
        <authorList>
            <person name="Kaneko T."/>
            <person name="Sato S."/>
            <person name="Kotani H."/>
            <person name="Tanaka A."/>
            <person name="Asamizu E."/>
            <person name="Nakamura Y."/>
            <person name="Miyajima N."/>
            <person name="Hirosawa M."/>
            <person name="Sugiura M."/>
            <person name="Sasamoto S."/>
            <person name="Kimura T."/>
            <person name="Hosouchi T."/>
            <person name="Matsuno A."/>
            <person name="Muraki A."/>
            <person name="Nakazaki N."/>
            <person name="Naruo K."/>
            <person name="Okumura S."/>
            <person name="Shimpo S."/>
            <person name="Takeuchi C."/>
            <person name="Wada T."/>
            <person name="Watanabe A."/>
            <person name="Yamada M."/>
            <person name="Yasuda M."/>
            <person name="Tabata S."/>
        </authorList>
    </citation>
    <scope>NUCLEOTIDE SEQUENCE [LARGE SCALE GENOMIC DNA]</scope>
    <source>
        <strain>ATCC 27184 / PCC 6803 / Kazusa</strain>
    </source>
</reference>
<reference key="3">
    <citation type="journal article" date="1997" name="J. Bacteriol.">
        <title>The ggtA gene encodes a subunit of the transport system for the osmoprotective compound glucosylglycerol in Synechocystis sp. strain PCC 6803.</title>
        <authorList>
            <person name="Hagemann M."/>
            <person name="Richter S."/>
            <person name="Mikkat S."/>
        </authorList>
    </citation>
    <scope>FUNCTION</scope>
    <scope>INDUCTION</scope>
    <scope>DISRUPTION PHENOTYPE</scope>
</reference>
<reference key="4">
    <citation type="journal article" date="2000" name="Arch. Microbiol.">
        <title>Molecular analysis of the ggtBCD gene cluster of Synechocystis sp. strain PCC6803 encoding subunits of an ABC transporter for osmoprotective compounds.</title>
        <authorList>
            <person name="Mikkat S."/>
            <person name="Hagemann M."/>
        </authorList>
    </citation>
    <scope>FUNCTION</scope>
    <scope>SUBUNIT</scope>
</reference>
<accession>Q79EE4</accession>
<accession>Q55035</accession>
<protein>
    <recommendedName>
        <fullName evidence="5">Osmoprotective compounds uptake ATP-binding protein GgtA</fullName>
        <ecNumber evidence="7">7.5.2.-</ecNumber>
    </recommendedName>
</protein>
<sequence length="363" mass="40756">MASVSFEQVTKQFDDYVAVNNLNLEIEDGEFLVFVGPSGCGKTTSLRLLAGLETVSQGQICIGDRRVNELSPKDRDIAMVFQSYALYPHMSVYENMAFSLDLQGKPKEEIRQRVCSAAELLGIEKLLHRKPKELSGGQRQRVAVGRAIVRKPSVFLMDEPLSNLDAMLRVQARKEISKLHSDLATTFIYVTHDQVEAMTMGDRIAVMKDGILQQVDSPANLYNQPANLFVAGFIGSPAMNFFQVERLSQEGKEKLSLDGVVLPMPDSVAKNGDRPLTLGIRPENIYHPQYLPLEIEPMELPATVNLVEMMGNELIVYAQTPAGTEFVARIDPRVNIKQKDSVKFVVDTQRFYYFDREMETAIF</sequence>
<comment type="function">
    <text evidence="2 3 5">Part of the ABC transporter complex GgtABCD involved in the uptake of the osmoprotective compounds glucosylglycerol (GG), sucrose and trehalose (PubMed:11081796, PubMed:9006025). Responsible for energy coupling to the transport system (Probable).</text>
</comment>
<comment type="subunit">
    <text evidence="6">The complex is composed of two ATP-binding proteins (GgtA), two transmembrane proteins (GgtC and GgtD) and a solute-binding protein (GgtB).</text>
</comment>
<comment type="subcellular location">
    <subcellularLocation>
        <location evidence="5">Cell membrane</location>
        <topology evidence="5">Peripheral membrane protein</topology>
    </subcellularLocation>
</comment>
<comment type="induction">
    <text evidence="3">Transcription increases in cells adapted to higher salt concentrations, whereas transcription is weak in basal medium.</text>
</comment>
<comment type="disruption phenotype">
    <text evidence="3">Insertion mutant loses its GG uptake ability, and shows leakage of glucosylglycerol from the cells into the medium. Mutation does not affect salt tolerance.</text>
</comment>
<comment type="similarity">
    <text evidence="5">Belongs to the ABC transporter superfamily.</text>
</comment>
<gene>
    <name evidence="4" type="primary">ggtA</name>
    <name evidence="8" type="ordered locus">slr0747</name>
</gene>
<keyword id="KW-0067">ATP-binding</keyword>
<keyword id="KW-1003">Cell membrane</keyword>
<keyword id="KW-0472">Membrane</keyword>
<keyword id="KW-0547">Nucleotide-binding</keyword>
<keyword id="KW-1185">Reference proteome</keyword>
<keyword id="KW-0762">Sugar transport</keyword>
<keyword id="KW-1278">Translocase</keyword>
<keyword id="KW-0813">Transport</keyword>
<feature type="chain" id="PRO_0000449361" description="Osmoprotective compounds uptake ATP-binding protein GgtA">
    <location>
        <begin position="1"/>
        <end position="363"/>
    </location>
</feature>
<feature type="domain" description="ABC transporter" evidence="1">
    <location>
        <begin position="4"/>
        <end position="234"/>
    </location>
</feature>
<feature type="binding site" evidence="1">
    <location>
        <begin position="36"/>
        <end position="43"/>
    </location>
    <ligand>
        <name>ATP</name>
        <dbReference type="ChEBI" id="CHEBI:30616"/>
    </ligand>
</feature>
<name>GGTA_SYNY3</name>